<feature type="signal peptide" evidence="1">
    <location>
        <begin position="1"/>
        <end position="18"/>
    </location>
</feature>
<feature type="propeptide" id="PRO_0000449382" evidence="4">
    <location>
        <begin position="19"/>
        <end position="26"/>
    </location>
</feature>
<feature type="chain" id="PRO_5004216947" description="Fungal defensin oryzeasin">
    <location>
        <begin position="27"/>
        <end position="69"/>
    </location>
</feature>
<feature type="disulfide bond" evidence="4">
    <location>
        <begin position="29"/>
        <end position="60"/>
    </location>
</feature>
<feature type="disulfide bond" evidence="2">
    <location>
        <begin position="44"/>
        <end position="66"/>
    </location>
</feature>
<feature type="disulfide bond" evidence="2">
    <location>
        <begin position="48"/>
        <end position="68"/>
    </location>
</feature>
<comment type="function">
    <text evidence="5">Shows antibacterial activity against numerous Gram-positive bacteria (Probable). It selectively inhibits peptidoglycan biosynthesis through complex formation with the cell wall precursor lipid II (1:1 molar ratio) thus inhibiting cell wall synthesis (PubMed:20508130).</text>
</comment>
<comment type="subcellular location">
    <subcellularLocation>
        <location evidence="4">Secreted</location>
    </subcellularLocation>
    <subcellularLocation>
        <location evidence="5">Target cell membrane</location>
    </subcellularLocation>
</comment>
<comment type="similarity">
    <text evidence="4">Belongs to the invertebrate defensin family.</text>
</comment>
<comment type="sequence caution" evidence="5">
    <conflict type="erroneous gene model prediction">
        <sequence resource="EMBL-CDS" id="BAE63845"/>
    </conflict>
</comment>
<evidence type="ECO:0000255" key="1"/>
<evidence type="ECO:0000255" key="2">
    <source>
        <dbReference type="PROSITE-ProRule" id="PRU00710"/>
    </source>
</evidence>
<evidence type="ECO:0000303" key="3">
    <source>
    </source>
</evidence>
<evidence type="ECO:0000305" key="4"/>
<evidence type="ECO:0000305" key="5">
    <source>
    </source>
</evidence>
<gene>
    <name type="ORF">AO090020000702</name>
</gene>
<keyword id="KW-0044">Antibiotic</keyword>
<keyword id="KW-0929">Antimicrobial</keyword>
<keyword id="KW-0165">Cleavage on pair of basic residues</keyword>
<keyword id="KW-0211">Defensin</keyword>
<keyword id="KW-1015">Disulfide bond</keyword>
<keyword id="KW-0391">Immunity</keyword>
<keyword id="KW-0399">Innate immunity</keyword>
<keyword id="KW-0446">Lipid-binding</keyword>
<keyword id="KW-0472">Membrane</keyword>
<keyword id="KW-1185">Reference proteome</keyword>
<keyword id="KW-0964">Secreted</keyword>
<keyword id="KW-0732">Signal</keyword>
<keyword id="KW-1052">Target cell membrane</keyword>
<keyword id="KW-1053">Target membrane</keyword>
<name>DEFEU_ASPOR</name>
<protein>
    <recommendedName>
        <fullName evidence="3">Fungal defensin oryzeasin</fullName>
    </recommendedName>
</protein>
<accession>Q2U3M0</accession>
<reference key="1">
    <citation type="journal article" date="2005" name="Nature">
        <title>Genome sequencing and analysis of Aspergillus oryzae.</title>
        <authorList>
            <person name="Machida M."/>
            <person name="Asai K."/>
            <person name="Sano M."/>
            <person name="Tanaka T."/>
            <person name="Kumagai T."/>
            <person name="Terai G."/>
            <person name="Kusumoto K."/>
            <person name="Arima T."/>
            <person name="Akita O."/>
            <person name="Kashiwagi Y."/>
            <person name="Abe K."/>
            <person name="Gomi K."/>
            <person name="Horiuchi H."/>
            <person name="Kitamoto K."/>
            <person name="Kobayashi T."/>
            <person name="Takeuchi M."/>
            <person name="Denning D.W."/>
            <person name="Galagan J.E."/>
            <person name="Nierman W.C."/>
            <person name="Yu J."/>
            <person name="Archer D.B."/>
            <person name="Bennett J.W."/>
            <person name="Bhatnagar D."/>
            <person name="Cleveland T.E."/>
            <person name="Fedorova N.D."/>
            <person name="Gotoh O."/>
            <person name="Horikawa H."/>
            <person name="Hosoyama A."/>
            <person name="Ichinomiya M."/>
            <person name="Igarashi R."/>
            <person name="Iwashita K."/>
            <person name="Juvvadi P.R."/>
            <person name="Kato M."/>
            <person name="Kato Y."/>
            <person name="Kin T."/>
            <person name="Kokubun A."/>
            <person name="Maeda H."/>
            <person name="Maeyama N."/>
            <person name="Maruyama J."/>
            <person name="Nagasaki H."/>
            <person name="Nakajima T."/>
            <person name="Oda K."/>
            <person name="Okada K."/>
            <person name="Paulsen I."/>
            <person name="Sakamoto K."/>
            <person name="Sawano T."/>
            <person name="Takahashi M."/>
            <person name="Takase K."/>
            <person name="Terabayashi Y."/>
            <person name="Wortman J.R."/>
            <person name="Yamada O."/>
            <person name="Yamagata Y."/>
            <person name="Anazawa H."/>
            <person name="Hata Y."/>
            <person name="Koide Y."/>
            <person name="Komori T."/>
            <person name="Koyama Y."/>
            <person name="Minetoki T."/>
            <person name="Suharnan S."/>
            <person name="Tanaka A."/>
            <person name="Isono K."/>
            <person name="Kuhara S."/>
            <person name="Ogasawara N."/>
            <person name="Kikuchi H."/>
        </authorList>
    </citation>
    <scope>NUCLEOTIDE SEQUENCE [LARGE SCALE GENOMIC DNA]</scope>
    <source>
        <strain>ATCC 42149 / RIB 40</strain>
    </source>
</reference>
<reference key="2">
    <citation type="journal article" date="2010" name="Science">
        <title>Plectasin, a fungal defensin, targets the bacterial cell wall precursor Lipid II.</title>
        <authorList>
            <person name="Schneider T."/>
            <person name="Kruse T."/>
            <person name="Wimmer R."/>
            <person name="Wiedemann I."/>
            <person name="Sass V."/>
            <person name="Pag U."/>
            <person name="Jansen A."/>
            <person name="Nielsen A.K."/>
            <person name="Mygind P.H."/>
            <person name="Raventos D.S."/>
            <person name="Neve S."/>
            <person name="Ravn B."/>
            <person name="Bonvin A.M."/>
            <person name="De Maria L."/>
            <person name="Andersen A.S."/>
            <person name="Gammelgaard L.K."/>
            <person name="Sahl H.G."/>
            <person name="Kristensen H.H."/>
        </authorList>
    </citation>
    <scope>FUNCTION</scope>
    <scope>BINDING TO LIPID II</scope>
</reference>
<sequence>MKLLTVAFSLLLLGQVHASPLVLDKRSSCQLGDVWDLNAADAACSASCAIQHGDKHGGHCDKNKVCVCN</sequence>
<organism>
    <name type="scientific">Aspergillus oryzae (strain ATCC 42149 / RIB 40)</name>
    <name type="common">Yellow koji mold</name>
    <dbReference type="NCBI Taxonomy" id="510516"/>
    <lineage>
        <taxon>Eukaryota</taxon>
        <taxon>Fungi</taxon>
        <taxon>Dikarya</taxon>
        <taxon>Ascomycota</taxon>
        <taxon>Pezizomycotina</taxon>
        <taxon>Eurotiomycetes</taxon>
        <taxon>Eurotiomycetidae</taxon>
        <taxon>Eurotiales</taxon>
        <taxon>Aspergillaceae</taxon>
        <taxon>Aspergillus</taxon>
        <taxon>Aspergillus subgen. Circumdati</taxon>
    </lineage>
</organism>
<proteinExistence type="evidence at protein level"/>
<dbReference type="EMBL" id="BA000054">
    <property type="protein sequence ID" value="BAE63845.1"/>
    <property type="status" value="ALT_SEQ"/>
    <property type="molecule type" value="Genomic_DNA"/>
</dbReference>
<dbReference type="RefSeq" id="XP_001824978.2">
    <property type="nucleotide sequence ID" value="XM_001824926.2"/>
</dbReference>
<dbReference type="EnsemblFungi" id="BAE63845">
    <property type="protein sequence ID" value="BAE63845"/>
    <property type="gene ID" value="AO090020000702"/>
</dbReference>
<dbReference type="HOGENOM" id="CLU_2305451_0_0_1"/>
<dbReference type="Proteomes" id="UP000006564">
    <property type="component" value="Chromosome 6"/>
</dbReference>
<dbReference type="GO" id="GO:0005576">
    <property type="term" value="C:extracellular region"/>
    <property type="evidence" value="ECO:0007669"/>
    <property type="project" value="UniProtKB-SubCell"/>
</dbReference>
<dbReference type="GO" id="GO:0016020">
    <property type="term" value="C:membrane"/>
    <property type="evidence" value="ECO:0007669"/>
    <property type="project" value="UniProtKB-KW"/>
</dbReference>
<dbReference type="GO" id="GO:0044218">
    <property type="term" value="C:other organism cell membrane"/>
    <property type="evidence" value="ECO:0007669"/>
    <property type="project" value="UniProtKB-KW"/>
</dbReference>
<dbReference type="GO" id="GO:0008289">
    <property type="term" value="F:lipid binding"/>
    <property type="evidence" value="ECO:0007669"/>
    <property type="project" value="UniProtKB-KW"/>
</dbReference>
<dbReference type="GO" id="GO:0042742">
    <property type="term" value="P:defense response to bacterium"/>
    <property type="evidence" value="ECO:0007669"/>
    <property type="project" value="UniProtKB-KW"/>
</dbReference>
<dbReference type="GO" id="GO:0006959">
    <property type="term" value="P:humoral immune response"/>
    <property type="evidence" value="ECO:0007669"/>
    <property type="project" value="TreeGrafter"/>
</dbReference>
<dbReference type="Gene3D" id="3.30.30.10">
    <property type="entry name" value="Knottin, scorpion toxin-like"/>
    <property type="match status" value="1"/>
</dbReference>
<dbReference type="InterPro" id="IPR036574">
    <property type="entry name" value="Scorpion_toxin-like_sf"/>
</dbReference>
<dbReference type="PANTHER" id="PTHR13645">
    <property type="entry name" value="DEFENSIN"/>
    <property type="match status" value="1"/>
</dbReference>
<dbReference type="PANTHER" id="PTHR13645:SF0">
    <property type="entry name" value="DEFENSIN"/>
    <property type="match status" value="1"/>
</dbReference>